<evidence type="ECO:0000255" key="1">
    <source>
        <dbReference type="HAMAP-Rule" id="MF_01865"/>
    </source>
</evidence>
<evidence type="ECO:0000255" key="2">
    <source>
        <dbReference type="PROSITE-ProRule" id="PRU01266"/>
    </source>
</evidence>
<sequence>MSKVTPQPKIGFVSLGCPKNLVDSERILTELRTEGYDVVPSYDDADMVIVNTCGFIDSAVQESLEAIGEALNENGKVIVTGCLGAKEDQIREVHPKVLEITGPHSYEQVLEHVHHYVPKPKHNPFLSLVPEQGVKLTPRHYAYLKISEGCNHRCTFCIIPSMRGDLVSRPIGEVLSEAKRLVDAGVKEILVISQDTSAYGVDVKHRTGFHNGEPVKTSMVSLCEQLSKLGIWTRLHYVYPYPHVDDVIPLMAEGKILPYLDIPLQHASPRILKLMKRPGSVDRQLARIKQWRKICPELTLRSTFIVGFPGETEEDFQMLLDFLKEARLDRVGCFKYSPVEGADANALPDQVPEEVKEERWNRFMQLQQQISAERLQEKVGREILVIIDEVDEEGAIGRSMADAPEIDGAVYLNGETNVKPGDILRVKVEHADEYDLWGSRV</sequence>
<protein>
    <recommendedName>
        <fullName evidence="1">Ribosomal protein uS12 methylthiotransferase RimO</fullName>
        <shortName evidence="1">uS12 MTTase</shortName>
        <shortName evidence="1">uS12 methylthiotransferase</shortName>
        <ecNumber evidence="1">2.8.4.4</ecNumber>
    </recommendedName>
    <alternativeName>
        <fullName evidence="1">Ribosomal protein uS12 (aspartate-C(3))-methylthiotransferase</fullName>
    </alternativeName>
    <alternativeName>
        <fullName evidence="1">Ribosome maturation factor RimO</fullName>
    </alternativeName>
</protein>
<organism>
    <name type="scientific">Escherichia coli O1:K1 / APEC</name>
    <dbReference type="NCBI Taxonomy" id="405955"/>
    <lineage>
        <taxon>Bacteria</taxon>
        <taxon>Pseudomonadati</taxon>
        <taxon>Pseudomonadota</taxon>
        <taxon>Gammaproteobacteria</taxon>
        <taxon>Enterobacterales</taxon>
        <taxon>Enterobacteriaceae</taxon>
        <taxon>Escherichia</taxon>
    </lineage>
</organism>
<proteinExistence type="inferred from homology"/>
<keyword id="KW-0004">4Fe-4S</keyword>
<keyword id="KW-0963">Cytoplasm</keyword>
<keyword id="KW-0408">Iron</keyword>
<keyword id="KW-0411">Iron-sulfur</keyword>
<keyword id="KW-0479">Metal-binding</keyword>
<keyword id="KW-1185">Reference proteome</keyword>
<keyword id="KW-0949">S-adenosyl-L-methionine</keyword>
<keyword id="KW-0808">Transferase</keyword>
<feature type="chain" id="PRO_0000374825" description="Ribosomal protein uS12 methylthiotransferase RimO">
    <location>
        <begin position="1"/>
        <end position="441"/>
    </location>
</feature>
<feature type="domain" description="MTTase N-terminal" evidence="1">
    <location>
        <begin position="8"/>
        <end position="118"/>
    </location>
</feature>
<feature type="domain" description="Radical SAM core" evidence="2">
    <location>
        <begin position="136"/>
        <end position="373"/>
    </location>
</feature>
<feature type="domain" description="TRAM" evidence="1">
    <location>
        <begin position="376"/>
        <end position="441"/>
    </location>
</feature>
<feature type="binding site" evidence="1">
    <location>
        <position position="17"/>
    </location>
    <ligand>
        <name>[4Fe-4S] cluster</name>
        <dbReference type="ChEBI" id="CHEBI:49883"/>
        <label>1</label>
    </ligand>
</feature>
<feature type="binding site" evidence="1">
    <location>
        <position position="53"/>
    </location>
    <ligand>
        <name>[4Fe-4S] cluster</name>
        <dbReference type="ChEBI" id="CHEBI:49883"/>
        <label>1</label>
    </ligand>
</feature>
<feature type="binding site" evidence="1">
    <location>
        <position position="82"/>
    </location>
    <ligand>
        <name>[4Fe-4S] cluster</name>
        <dbReference type="ChEBI" id="CHEBI:49883"/>
        <label>1</label>
    </ligand>
</feature>
<feature type="binding site" evidence="1">
    <location>
        <position position="150"/>
    </location>
    <ligand>
        <name>[4Fe-4S] cluster</name>
        <dbReference type="ChEBI" id="CHEBI:49883"/>
        <label>2</label>
        <note>4Fe-4S-S-AdoMet</note>
    </ligand>
</feature>
<feature type="binding site" evidence="1">
    <location>
        <position position="154"/>
    </location>
    <ligand>
        <name>[4Fe-4S] cluster</name>
        <dbReference type="ChEBI" id="CHEBI:49883"/>
        <label>2</label>
        <note>4Fe-4S-S-AdoMet</note>
    </ligand>
</feature>
<feature type="binding site" evidence="1">
    <location>
        <position position="157"/>
    </location>
    <ligand>
        <name>[4Fe-4S] cluster</name>
        <dbReference type="ChEBI" id="CHEBI:49883"/>
        <label>2</label>
        <note>4Fe-4S-S-AdoMet</note>
    </ligand>
</feature>
<accession>A1A974</accession>
<name>RIMO_ECOK1</name>
<reference key="1">
    <citation type="journal article" date="2007" name="J. Bacteriol.">
        <title>The genome sequence of avian pathogenic Escherichia coli strain O1:K1:H7 shares strong similarities with human extraintestinal pathogenic E. coli genomes.</title>
        <authorList>
            <person name="Johnson T.J."/>
            <person name="Kariyawasam S."/>
            <person name="Wannemuehler Y."/>
            <person name="Mangiamele P."/>
            <person name="Johnson S.J."/>
            <person name="Doetkott C."/>
            <person name="Skyberg J.A."/>
            <person name="Lynne A.M."/>
            <person name="Johnson J.R."/>
            <person name="Nolan L.K."/>
        </authorList>
    </citation>
    <scope>NUCLEOTIDE SEQUENCE [LARGE SCALE GENOMIC DNA]</scope>
</reference>
<dbReference type="EC" id="2.8.4.4" evidence="1"/>
<dbReference type="EMBL" id="CP000468">
    <property type="protein sequence ID" value="ABJ00214.1"/>
    <property type="molecule type" value="Genomic_DNA"/>
</dbReference>
<dbReference type="RefSeq" id="WP_000049378.1">
    <property type="nucleotide sequence ID" value="NZ_CADILS010000017.1"/>
</dbReference>
<dbReference type="SMR" id="A1A974"/>
<dbReference type="KEGG" id="ecv:APECO1_1258"/>
<dbReference type="HOGENOM" id="CLU_018697_0_0_6"/>
<dbReference type="Proteomes" id="UP000008216">
    <property type="component" value="Chromosome"/>
</dbReference>
<dbReference type="GO" id="GO:0005829">
    <property type="term" value="C:cytosol"/>
    <property type="evidence" value="ECO:0007669"/>
    <property type="project" value="TreeGrafter"/>
</dbReference>
<dbReference type="GO" id="GO:0051539">
    <property type="term" value="F:4 iron, 4 sulfur cluster binding"/>
    <property type="evidence" value="ECO:0007669"/>
    <property type="project" value="UniProtKB-UniRule"/>
</dbReference>
<dbReference type="GO" id="GO:0035599">
    <property type="term" value="F:aspartic acid methylthiotransferase activity"/>
    <property type="evidence" value="ECO:0007669"/>
    <property type="project" value="TreeGrafter"/>
</dbReference>
<dbReference type="GO" id="GO:0046872">
    <property type="term" value="F:metal ion binding"/>
    <property type="evidence" value="ECO:0007669"/>
    <property type="project" value="UniProtKB-KW"/>
</dbReference>
<dbReference type="GO" id="GO:0103039">
    <property type="term" value="F:protein methylthiotransferase activity"/>
    <property type="evidence" value="ECO:0007669"/>
    <property type="project" value="UniProtKB-EC"/>
</dbReference>
<dbReference type="GO" id="GO:0006400">
    <property type="term" value="P:tRNA modification"/>
    <property type="evidence" value="ECO:0007669"/>
    <property type="project" value="InterPro"/>
</dbReference>
<dbReference type="CDD" id="cd01335">
    <property type="entry name" value="Radical_SAM"/>
    <property type="match status" value="1"/>
</dbReference>
<dbReference type="FunFam" id="2.40.50.140:FF:000060">
    <property type="entry name" value="Ribosomal protein S12 methylthiotransferase RimO"/>
    <property type="match status" value="1"/>
</dbReference>
<dbReference type="FunFam" id="3.40.50.12160:FF:000002">
    <property type="entry name" value="Ribosomal protein S12 methylthiotransferase RimO"/>
    <property type="match status" value="1"/>
</dbReference>
<dbReference type="FunFam" id="3.80.30.20:FF:000001">
    <property type="entry name" value="tRNA-2-methylthio-N(6)-dimethylallyladenosine synthase 2"/>
    <property type="match status" value="1"/>
</dbReference>
<dbReference type="Gene3D" id="3.40.50.12160">
    <property type="entry name" value="Methylthiotransferase, N-terminal domain"/>
    <property type="match status" value="1"/>
</dbReference>
<dbReference type="Gene3D" id="2.40.50.140">
    <property type="entry name" value="Nucleic acid-binding proteins"/>
    <property type="match status" value="1"/>
</dbReference>
<dbReference type="Gene3D" id="3.80.30.20">
    <property type="entry name" value="tm_1862 like domain"/>
    <property type="match status" value="1"/>
</dbReference>
<dbReference type="HAMAP" id="MF_01865">
    <property type="entry name" value="MTTase_RimO"/>
    <property type="match status" value="1"/>
</dbReference>
<dbReference type="InterPro" id="IPR006638">
    <property type="entry name" value="Elp3/MiaA/NifB-like_rSAM"/>
</dbReference>
<dbReference type="InterPro" id="IPR005839">
    <property type="entry name" value="Methylthiotransferase"/>
</dbReference>
<dbReference type="InterPro" id="IPR020612">
    <property type="entry name" value="Methylthiotransferase_CS"/>
</dbReference>
<dbReference type="InterPro" id="IPR013848">
    <property type="entry name" value="Methylthiotransferase_N"/>
</dbReference>
<dbReference type="InterPro" id="IPR038135">
    <property type="entry name" value="Methylthiotransferase_N_sf"/>
</dbReference>
<dbReference type="InterPro" id="IPR012340">
    <property type="entry name" value="NA-bd_OB-fold"/>
</dbReference>
<dbReference type="InterPro" id="IPR005840">
    <property type="entry name" value="Ribosomal_uS12_MeSTrfase_RimO"/>
</dbReference>
<dbReference type="InterPro" id="IPR007197">
    <property type="entry name" value="rSAM"/>
</dbReference>
<dbReference type="InterPro" id="IPR023404">
    <property type="entry name" value="rSAM_horseshoe"/>
</dbReference>
<dbReference type="InterPro" id="IPR002792">
    <property type="entry name" value="TRAM_dom"/>
</dbReference>
<dbReference type="NCBIfam" id="TIGR01125">
    <property type="entry name" value="30S ribosomal protein S12 methylthiotransferase RimO"/>
    <property type="match status" value="1"/>
</dbReference>
<dbReference type="NCBIfam" id="TIGR00089">
    <property type="entry name" value="MiaB/RimO family radical SAM methylthiotransferase"/>
    <property type="match status" value="1"/>
</dbReference>
<dbReference type="PANTHER" id="PTHR43837">
    <property type="entry name" value="RIBOSOMAL PROTEIN S12 METHYLTHIOTRANSFERASE RIMO"/>
    <property type="match status" value="1"/>
</dbReference>
<dbReference type="PANTHER" id="PTHR43837:SF1">
    <property type="entry name" value="RIBOSOMAL PROTEIN US12 METHYLTHIOTRANSFERASE RIMO"/>
    <property type="match status" value="1"/>
</dbReference>
<dbReference type="Pfam" id="PF04055">
    <property type="entry name" value="Radical_SAM"/>
    <property type="match status" value="1"/>
</dbReference>
<dbReference type="Pfam" id="PF18693">
    <property type="entry name" value="TRAM_2"/>
    <property type="match status" value="1"/>
</dbReference>
<dbReference type="Pfam" id="PF00919">
    <property type="entry name" value="UPF0004"/>
    <property type="match status" value="1"/>
</dbReference>
<dbReference type="SFLD" id="SFLDG01082">
    <property type="entry name" value="B12-binding_domain_containing"/>
    <property type="match status" value="1"/>
</dbReference>
<dbReference type="SFLD" id="SFLDS00029">
    <property type="entry name" value="Radical_SAM"/>
    <property type="match status" value="1"/>
</dbReference>
<dbReference type="SFLD" id="SFLDF00274">
    <property type="entry name" value="ribosomal_protein_S12_methylth"/>
    <property type="match status" value="1"/>
</dbReference>
<dbReference type="SMART" id="SM00729">
    <property type="entry name" value="Elp3"/>
    <property type="match status" value="1"/>
</dbReference>
<dbReference type="SUPFAM" id="SSF102114">
    <property type="entry name" value="Radical SAM enzymes"/>
    <property type="match status" value="1"/>
</dbReference>
<dbReference type="PROSITE" id="PS51449">
    <property type="entry name" value="MTTASE_N"/>
    <property type="match status" value="1"/>
</dbReference>
<dbReference type="PROSITE" id="PS01278">
    <property type="entry name" value="MTTASE_RADICAL"/>
    <property type="match status" value="1"/>
</dbReference>
<dbReference type="PROSITE" id="PS51918">
    <property type="entry name" value="RADICAL_SAM"/>
    <property type="match status" value="1"/>
</dbReference>
<dbReference type="PROSITE" id="PS50926">
    <property type="entry name" value="TRAM"/>
    <property type="match status" value="1"/>
</dbReference>
<comment type="function">
    <text evidence="1">Catalyzes the methylthiolation of an aspartic acid residue of ribosomal protein uS12.</text>
</comment>
<comment type="catalytic activity">
    <reaction evidence="1">
        <text>L-aspartate(89)-[ribosomal protein uS12]-hydrogen + (sulfur carrier)-SH + AH2 + 2 S-adenosyl-L-methionine = 3-methylsulfanyl-L-aspartate(89)-[ribosomal protein uS12]-hydrogen + (sulfur carrier)-H + 5'-deoxyadenosine + L-methionine + A + S-adenosyl-L-homocysteine + 2 H(+)</text>
        <dbReference type="Rhea" id="RHEA:37087"/>
        <dbReference type="Rhea" id="RHEA-COMP:10460"/>
        <dbReference type="Rhea" id="RHEA-COMP:10461"/>
        <dbReference type="Rhea" id="RHEA-COMP:14737"/>
        <dbReference type="Rhea" id="RHEA-COMP:14739"/>
        <dbReference type="ChEBI" id="CHEBI:13193"/>
        <dbReference type="ChEBI" id="CHEBI:15378"/>
        <dbReference type="ChEBI" id="CHEBI:17319"/>
        <dbReference type="ChEBI" id="CHEBI:17499"/>
        <dbReference type="ChEBI" id="CHEBI:29917"/>
        <dbReference type="ChEBI" id="CHEBI:29961"/>
        <dbReference type="ChEBI" id="CHEBI:57844"/>
        <dbReference type="ChEBI" id="CHEBI:57856"/>
        <dbReference type="ChEBI" id="CHEBI:59789"/>
        <dbReference type="ChEBI" id="CHEBI:64428"/>
        <dbReference type="ChEBI" id="CHEBI:73599"/>
        <dbReference type="EC" id="2.8.4.4"/>
    </reaction>
</comment>
<comment type="cofactor">
    <cofactor evidence="1">
        <name>[4Fe-4S] cluster</name>
        <dbReference type="ChEBI" id="CHEBI:49883"/>
    </cofactor>
    <text evidence="1">Binds 2 [4Fe-4S] clusters. One cluster is coordinated with 3 cysteines and an exchangeable S-adenosyl-L-methionine.</text>
</comment>
<comment type="subcellular location">
    <subcellularLocation>
        <location evidence="1">Cytoplasm</location>
    </subcellularLocation>
</comment>
<comment type="similarity">
    <text evidence="1">Belongs to the methylthiotransferase family. RimO subfamily.</text>
</comment>
<gene>
    <name evidence="1" type="primary">rimO</name>
    <name type="ordered locus">Ecok1_07200</name>
    <name type="ORF">APECO1_1258</name>
</gene>